<reference key="1">
    <citation type="journal article" date="2007" name="Genes Dev.">
        <title>New insights into Acinetobacter baumannii pathogenesis revealed by high-density pyrosequencing and transposon mutagenesis.</title>
        <authorList>
            <person name="Smith M.G."/>
            <person name="Gianoulis T.A."/>
            <person name="Pukatzki S."/>
            <person name="Mekalanos J.J."/>
            <person name="Ornston L.N."/>
            <person name="Gerstein M."/>
            <person name="Snyder M."/>
        </authorList>
    </citation>
    <scope>NUCLEOTIDE SEQUENCE [LARGE SCALE GENOMIC DNA]</scope>
    <source>
        <strain>ATCC 17978 / DSM 105126 / CIP 53.77 / LMG 1025 / NCDC KC755 / 5377</strain>
    </source>
</reference>
<protein>
    <recommendedName>
        <fullName evidence="1">Large ribosomal subunit protein uL30</fullName>
    </recommendedName>
    <alternativeName>
        <fullName evidence="2">50S ribosomal protein L30</fullName>
    </alternativeName>
</protein>
<comment type="subunit">
    <text evidence="1">Part of the 50S ribosomal subunit.</text>
</comment>
<comment type="similarity">
    <text evidence="1">Belongs to the universal ribosomal protein uL30 family.</text>
</comment>
<feature type="chain" id="PRO_1000055998" description="Large ribosomal subunit protein uL30">
    <location>
        <begin position="1"/>
        <end position="58"/>
    </location>
</feature>
<keyword id="KW-0687">Ribonucleoprotein</keyword>
<keyword id="KW-0689">Ribosomal protein</keyword>
<dbReference type="EMBL" id="CP000521">
    <property type="protein sequence ID" value="ABO13460.1"/>
    <property type="molecule type" value="Genomic_DNA"/>
</dbReference>
<dbReference type="RefSeq" id="WP_000849088.1">
    <property type="nucleotide sequence ID" value="NZ_CP053098.1"/>
</dbReference>
<dbReference type="SMR" id="A3M966"/>
<dbReference type="GeneID" id="9380834"/>
<dbReference type="KEGG" id="acb:A1S_3063"/>
<dbReference type="HOGENOM" id="CLU_131047_1_4_6"/>
<dbReference type="GO" id="GO:0022625">
    <property type="term" value="C:cytosolic large ribosomal subunit"/>
    <property type="evidence" value="ECO:0007669"/>
    <property type="project" value="TreeGrafter"/>
</dbReference>
<dbReference type="GO" id="GO:0003735">
    <property type="term" value="F:structural constituent of ribosome"/>
    <property type="evidence" value="ECO:0007669"/>
    <property type="project" value="InterPro"/>
</dbReference>
<dbReference type="GO" id="GO:0006412">
    <property type="term" value="P:translation"/>
    <property type="evidence" value="ECO:0007669"/>
    <property type="project" value="UniProtKB-UniRule"/>
</dbReference>
<dbReference type="CDD" id="cd01658">
    <property type="entry name" value="Ribosomal_L30"/>
    <property type="match status" value="1"/>
</dbReference>
<dbReference type="FunFam" id="3.30.1390.20:FF:000001">
    <property type="entry name" value="50S ribosomal protein L30"/>
    <property type="match status" value="1"/>
</dbReference>
<dbReference type="Gene3D" id="3.30.1390.20">
    <property type="entry name" value="Ribosomal protein L30, ferredoxin-like fold domain"/>
    <property type="match status" value="1"/>
</dbReference>
<dbReference type="HAMAP" id="MF_01371_B">
    <property type="entry name" value="Ribosomal_uL30_B"/>
    <property type="match status" value="1"/>
</dbReference>
<dbReference type="InterPro" id="IPR036919">
    <property type="entry name" value="Ribo_uL30_ferredoxin-like_sf"/>
</dbReference>
<dbReference type="InterPro" id="IPR005996">
    <property type="entry name" value="Ribosomal_uL30_bac-type"/>
</dbReference>
<dbReference type="InterPro" id="IPR016082">
    <property type="entry name" value="Ribosomal_uL30_ferredoxin-like"/>
</dbReference>
<dbReference type="NCBIfam" id="TIGR01308">
    <property type="entry name" value="rpmD_bact"/>
    <property type="match status" value="1"/>
</dbReference>
<dbReference type="PANTHER" id="PTHR15892:SF2">
    <property type="entry name" value="LARGE RIBOSOMAL SUBUNIT PROTEIN UL30M"/>
    <property type="match status" value="1"/>
</dbReference>
<dbReference type="PANTHER" id="PTHR15892">
    <property type="entry name" value="MITOCHONDRIAL RIBOSOMAL PROTEIN L30"/>
    <property type="match status" value="1"/>
</dbReference>
<dbReference type="Pfam" id="PF00327">
    <property type="entry name" value="Ribosomal_L30"/>
    <property type="match status" value="1"/>
</dbReference>
<dbReference type="PIRSF" id="PIRSF002211">
    <property type="entry name" value="Ribosomal_L30_bac-type"/>
    <property type="match status" value="1"/>
</dbReference>
<dbReference type="SUPFAM" id="SSF55129">
    <property type="entry name" value="Ribosomal protein L30p/L7e"/>
    <property type="match status" value="1"/>
</dbReference>
<accession>A3M966</accession>
<sequence>MKTIKVTQTKSSSHRLKNHKLCLQGLGLRRIGHTVEVQDTPSNRGMINKVYYMVSVEE</sequence>
<name>RL30_ACIBT</name>
<evidence type="ECO:0000255" key="1">
    <source>
        <dbReference type="HAMAP-Rule" id="MF_01371"/>
    </source>
</evidence>
<evidence type="ECO:0000305" key="2"/>
<proteinExistence type="inferred from homology"/>
<gene>
    <name evidence="1" type="primary">rpmD</name>
    <name type="ordered locus">A1S_3063</name>
</gene>
<organism>
    <name type="scientific">Acinetobacter baumannii (strain ATCC 17978 / DSM 105126 / CIP 53.77 / LMG 1025 / NCDC KC755 / 5377)</name>
    <dbReference type="NCBI Taxonomy" id="400667"/>
    <lineage>
        <taxon>Bacteria</taxon>
        <taxon>Pseudomonadati</taxon>
        <taxon>Pseudomonadota</taxon>
        <taxon>Gammaproteobacteria</taxon>
        <taxon>Moraxellales</taxon>
        <taxon>Moraxellaceae</taxon>
        <taxon>Acinetobacter</taxon>
        <taxon>Acinetobacter calcoaceticus/baumannii complex</taxon>
    </lineage>
</organism>